<reference key="1">
    <citation type="journal article" date="2002" name="Nat. Neurosci.">
        <title>The olfactory receptor gene superfamily of the mouse.</title>
        <authorList>
            <person name="Zhang X."/>
            <person name="Firestein S."/>
        </authorList>
    </citation>
    <scope>NUCLEOTIDE SEQUENCE [GENOMIC DNA]</scope>
</reference>
<reference key="2">
    <citation type="journal article" date="2002" name="Hum. Mol. Genet.">
        <title>Different evolutionary processes shaped the mouse and human olfactory receptor gene families.</title>
        <authorList>
            <person name="Young J.M."/>
            <person name="Friedman C."/>
            <person name="Williams E.M."/>
            <person name="Ross J.A."/>
            <person name="Tonnes-Priddy L."/>
            <person name="Trask B.J."/>
        </authorList>
    </citation>
    <scope>NUCLEOTIDE SEQUENCE [GENOMIC DNA]</scope>
</reference>
<reference key="3">
    <citation type="journal article" date="2002" name="Hum. Mol. Genet.">
        <authorList>
            <person name="Young J.M."/>
            <person name="Friedman C."/>
            <person name="Williams E.M."/>
            <person name="Ross J.A."/>
            <person name="Tonnes-Priddy L."/>
            <person name="Trask B.J."/>
        </authorList>
    </citation>
    <scope>ERRATUM OF PUBMED:11875048</scope>
</reference>
<feature type="chain" id="PRO_0000150854" description="Olfactory receptor 5P79">
    <location>
        <begin position="1"/>
        <end position="316"/>
    </location>
</feature>
<feature type="topological domain" description="Extracellular" evidence="1">
    <location>
        <begin position="1"/>
        <end position="28"/>
    </location>
</feature>
<feature type="transmembrane region" description="Helical; Name=1" evidence="1">
    <location>
        <begin position="29"/>
        <end position="49"/>
    </location>
</feature>
<feature type="topological domain" description="Cytoplasmic" evidence="1">
    <location>
        <begin position="50"/>
        <end position="57"/>
    </location>
</feature>
<feature type="transmembrane region" description="Helical; Name=2" evidence="1">
    <location>
        <begin position="58"/>
        <end position="78"/>
    </location>
</feature>
<feature type="topological domain" description="Extracellular" evidence="1">
    <location>
        <begin position="79"/>
        <end position="102"/>
    </location>
</feature>
<feature type="transmembrane region" description="Helical; Name=3" evidence="1">
    <location>
        <begin position="103"/>
        <end position="123"/>
    </location>
</feature>
<feature type="topological domain" description="Cytoplasmic" evidence="1">
    <location>
        <begin position="124"/>
        <end position="136"/>
    </location>
</feature>
<feature type="transmembrane region" description="Helical; Name=4" evidence="1">
    <location>
        <begin position="137"/>
        <end position="157"/>
    </location>
</feature>
<feature type="topological domain" description="Extracellular" evidence="1">
    <location>
        <begin position="158"/>
        <end position="199"/>
    </location>
</feature>
<feature type="transmembrane region" description="Helical; Name=5" evidence="1">
    <location>
        <begin position="200"/>
        <end position="220"/>
    </location>
</feature>
<feature type="topological domain" description="Cytoplasmic" evidence="1">
    <location>
        <begin position="221"/>
        <end position="240"/>
    </location>
</feature>
<feature type="transmembrane region" description="Helical; Name=6" evidence="1">
    <location>
        <begin position="241"/>
        <end position="261"/>
    </location>
</feature>
<feature type="topological domain" description="Extracellular" evidence="1">
    <location>
        <begin position="262"/>
        <end position="274"/>
    </location>
</feature>
<feature type="transmembrane region" description="Helical; Name=7" evidence="1">
    <location>
        <begin position="275"/>
        <end position="297"/>
    </location>
</feature>
<feature type="topological domain" description="Cytoplasmic" evidence="1">
    <location>
        <begin position="298"/>
        <end position="316"/>
    </location>
</feature>
<feature type="glycosylation site" description="N-linked (GlcNAc...) asparagine" evidence="1">
    <location>
        <position position="8"/>
    </location>
</feature>
<feature type="disulfide bond" evidence="2">
    <location>
        <begin position="100"/>
        <end position="192"/>
    </location>
</feature>
<sequence length="316" mass="34824">MGILKDGNHTAVTEFILLGLTDDPVLKVVLFTIILCIYLVTVSGNLSTILLIRVSSQLHHPMYFFLSHLASVDIGISSSVTPNMLVNFLLERSTISYLGCGIQLGSGAFFGSTESFLLAAMAYDHFMAICNPLLYSTKMSTQVCIQLLVGSYIGGFLNASSFILSFFSFLFCGPNKVNHFFCDFTPLVELSCSDNSVLLILDSFSAGSIIVITVLVIAISYTYILITILKMHSTEGRHKAFSTCTSHLTAVTVFYGTVTFIYVMPKSSYSTDQNKVLSVFYMIAIAIPMLNPLIYSLRNNEIKNALKRQLSKKTFS</sequence>
<proteinExistence type="inferred from homology"/>
<dbReference type="EMBL" id="AY073352">
    <property type="protein sequence ID" value="AAL61015.1"/>
    <property type="molecule type" value="Genomic_DNA"/>
</dbReference>
<dbReference type="EMBL" id="AY317615">
    <property type="protein sequence ID" value="AAP71005.1"/>
    <property type="molecule type" value="Genomic_DNA"/>
</dbReference>
<dbReference type="CCDS" id="CCDS21721.1"/>
<dbReference type="RefSeq" id="NP_666954.1">
    <property type="nucleotide sequence ID" value="NM_146743.1"/>
</dbReference>
<dbReference type="SMR" id="Q8VG13"/>
<dbReference type="FunCoup" id="Q8VG13">
    <property type="interactions" value="1141"/>
</dbReference>
<dbReference type="STRING" id="10090.ENSMUSP00000078926"/>
<dbReference type="GlyCosmos" id="Q8VG13">
    <property type="glycosylation" value="1 site, No reported glycans"/>
</dbReference>
<dbReference type="GlyGen" id="Q8VG13">
    <property type="glycosylation" value="1 site"/>
</dbReference>
<dbReference type="PaxDb" id="10090-ENSMUSP00000078926"/>
<dbReference type="DNASU" id="258738"/>
<dbReference type="Ensembl" id="ENSMUST00000080014.2">
    <property type="protein sequence ID" value="ENSMUSP00000078926.2"/>
    <property type="gene ID" value="ENSMUSG00000061000.2"/>
</dbReference>
<dbReference type="GeneID" id="258738"/>
<dbReference type="KEGG" id="mmu:258738"/>
<dbReference type="UCSC" id="uc009jcq.1">
    <property type="organism name" value="mouse"/>
</dbReference>
<dbReference type="AGR" id="MGI:3030341"/>
<dbReference type="CTD" id="258738"/>
<dbReference type="MGI" id="MGI:3030341">
    <property type="gene designation" value="Or5p79"/>
</dbReference>
<dbReference type="VEuPathDB" id="HostDB:ENSMUSG00000061000"/>
<dbReference type="eggNOG" id="ENOG502SKA1">
    <property type="taxonomic scope" value="Eukaryota"/>
</dbReference>
<dbReference type="GeneTree" id="ENSGT01130000278279"/>
<dbReference type="HOGENOM" id="CLU_012526_1_0_1"/>
<dbReference type="InParanoid" id="Q8VG13"/>
<dbReference type="OMA" id="FYMIAIA"/>
<dbReference type="OrthoDB" id="9440694at2759"/>
<dbReference type="PhylomeDB" id="Q8VG13"/>
<dbReference type="TreeFam" id="TF338848"/>
<dbReference type="BioGRID-ORCS" id="258738">
    <property type="hits" value="4 hits in 71 CRISPR screens"/>
</dbReference>
<dbReference type="PRO" id="PR:Q8VG13"/>
<dbReference type="Proteomes" id="UP000000589">
    <property type="component" value="Chromosome 7"/>
</dbReference>
<dbReference type="RNAct" id="Q8VG13">
    <property type="molecule type" value="protein"/>
</dbReference>
<dbReference type="GO" id="GO:0016020">
    <property type="term" value="C:membrane"/>
    <property type="evidence" value="ECO:0000247"/>
    <property type="project" value="MGI"/>
</dbReference>
<dbReference type="GO" id="GO:0005886">
    <property type="term" value="C:plasma membrane"/>
    <property type="evidence" value="ECO:0007669"/>
    <property type="project" value="UniProtKB-SubCell"/>
</dbReference>
<dbReference type="GO" id="GO:0004930">
    <property type="term" value="F:G protein-coupled receptor activity"/>
    <property type="evidence" value="ECO:0007669"/>
    <property type="project" value="UniProtKB-KW"/>
</dbReference>
<dbReference type="GO" id="GO:0004984">
    <property type="term" value="F:olfactory receptor activity"/>
    <property type="evidence" value="ECO:0000247"/>
    <property type="project" value="MGI"/>
</dbReference>
<dbReference type="GO" id="GO:0007186">
    <property type="term" value="P:G protein-coupled receptor signaling pathway"/>
    <property type="evidence" value="ECO:0000247"/>
    <property type="project" value="MGI"/>
</dbReference>
<dbReference type="GO" id="GO:0007608">
    <property type="term" value="P:sensory perception of smell"/>
    <property type="evidence" value="ECO:0000247"/>
    <property type="project" value="MGI"/>
</dbReference>
<dbReference type="FunFam" id="1.20.1070.10:FF:000004">
    <property type="entry name" value="Olfactory receptor"/>
    <property type="match status" value="1"/>
</dbReference>
<dbReference type="Gene3D" id="1.20.1070.10">
    <property type="entry name" value="Rhodopsin 7-helix transmembrane proteins"/>
    <property type="match status" value="1"/>
</dbReference>
<dbReference type="InterPro" id="IPR000276">
    <property type="entry name" value="GPCR_Rhodpsn"/>
</dbReference>
<dbReference type="InterPro" id="IPR017452">
    <property type="entry name" value="GPCR_Rhodpsn_7TM"/>
</dbReference>
<dbReference type="InterPro" id="IPR000725">
    <property type="entry name" value="Olfact_rcpt"/>
</dbReference>
<dbReference type="PANTHER" id="PTHR48018">
    <property type="entry name" value="OLFACTORY RECEPTOR"/>
    <property type="match status" value="1"/>
</dbReference>
<dbReference type="Pfam" id="PF13853">
    <property type="entry name" value="7tm_4"/>
    <property type="match status" value="1"/>
</dbReference>
<dbReference type="PRINTS" id="PR00237">
    <property type="entry name" value="GPCRRHODOPSN"/>
</dbReference>
<dbReference type="PRINTS" id="PR00245">
    <property type="entry name" value="OLFACTORYR"/>
</dbReference>
<dbReference type="SUPFAM" id="SSF81321">
    <property type="entry name" value="Family A G protein-coupled receptor-like"/>
    <property type="match status" value="1"/>
</dbReference>
<dbReference type="PROSITE" id="PS50262">
    <property type="entry name" value="G_PROTEIN_RECEP_F1_2"/>
    <property type="match status" value="1"/>
</dbReference>
<keyword id="KW-1003">Cell membrane</keyword>
<keyword id="KW-1015">Disulfide bond</keyword>
<keyword id="KW-0297">G-protein coupled receptor</keyword>
<keyword id="KW-0325">Glycoprotein</keyword>
<keyword id="KW-0472">Membrane</keyword>
<keyword id="KW-0552">Olfaction</keyword>
<keyword id="KW-0675">Receptor</keyword>
<keyword id="KW-1185">Reference proteome</keyword>
<keyword id="KW-0716">Sensory transduction</keyword>
<keyword id="KW-0807">Transducer</keyword>
<keyword id="KW-0812">Transmembrane</keyword>
<keyword id="KW-1133">Transmembrane helix</keyword>
<organism>
    <name type="scientific">Mus musculus</name>
    <name type="common">Mouse</name>
    <dbReference type="NCBI Taxonomy" id="10090"/>
    <lineage>
        <taxon>Eukaryota</taxon>
        <taxon>Metazoa</taxon>
        <taxon>Chordata</taxon>
        <taxon>Craniata</taxon>
        <taxon>Vertebrata</taxon>
        <taxon>Euteleostomi</taxon>
        <taxon>Mammalia</taxon>
        <taxon>Eutheria</taxon>
        <taxon>Euarchontoglires</taxon>
        <taxon>Glires</taxon>
        <taxon>Rodentia</taxon>
        <taxon>Myomorpha</taxon>
        <taxon>Muroidea</taxon>
        <taxon>Muridae</taxon>
        <taxon>Murinae</taxon>
        <taxon>Mus</taxon>
        <taxon>Mus</taxon>
    </lineage>
</organism>
<evidence type="ECO:0000255" key="1"/>
<evidence type="ECO:0000255" key="2">
    <source>
        <dbReference type="PROSITE-ProRule" id="PRU00521"/>
    </source>
</evidence>
<evidence type="ECO:0000305" key="3"/>
<evidence type="ECO:0000312" key="4">
    <source>
        <dbReference type="MGI" id="MGI:3030341"/>
    </source>
</evidence>
<gene>
    <name evidence="4" type="primary">Or5p79</name>
    <name evidence="4" type="synonym">Mor204-7</name>
    <name evidence="4" type="synonym">Olfr507</name>
</gene>
<comment type="function">
    <text>Potential odorant receptor.</text>
</comment>
<comment type="subcellular location">
    <subcellularLocation>
        <location evidence="3">Cell membrane</location>
        <topology evidence="1">Multi-pass membrane protein</topology>
    </subcellularLocation>
</comment>
<comment type="similarity">
    <text evidence="2">Belongs to the G-protein coupled receptor 1 family.</text>
</comment>
<accession>Q8VG13</accession>
<protein>
    <recommendedName>
        <fullName evidence="3">Olfactory receptor 5P79</fullName>
    </recommendedName>
    <alternativeName>
        <fullName>Olfactory receptor 204-7</fullName>
    </alternativeName>
    <alternativeName>
        <fullName>Olfactory receptor 507</fullName>
    </alternativeName>
</protein>
<name>O5P79_MOUSE</name>